<dbReference type="EC" id="6.1.1.20" evidence="1"/>
<dbReference type="EMBL" id="CP000026">
    <property type="protein sequence ID" value="AAV77439.1"/>
    <property type="molecule type" value="Genomic_DNA"/>
</dbReference>
<dbReference type="RefSeq" id="WP_000018570.1">
    <property type="nucleotide sequence ID" value="NC_006511.1"/>
</dbReference>
<dbReference type="SMR" id="Q5PH92"/>
<dbReference type="KEGG" id="spt:SPA1506"/>
<dbReference type="HOGENOM" id="CLU_025086_0_1_6"/>
<dbReference type="Proteomes" id="UP000008185">
    <property type="component" value="Chromosome"/>
</dbReference>
<dbReference type="GO" id="GO:0005737">
    <property type="term" value="C:cytoplasm"/>
    <property type="evidence" value="ECO:0007669"/>
    <property type="project" value="UniProtKB-SubCell"/>
</dbReference>
<dbReference type="GO" id="GO:0005524">
    <property type="term" value="F:ATP binding"/>
    <property type="evidence" value="ECO:0007669"/>
    <property type="project" value="UniProtKB-UniRule"/>
</dbReference>
<dbReference type="GO" id="GO:0000287">
    <property type="term" value="F:magnesium ion binding"/>
    <property type="evidence" value="ECO:0007669"/>
    <property type="project" value="UniProtKB-UniRule"/>
</dbReference>
<dbReference type="GO" id="GO:0004826">
    <property type="term" value="F:phenylalanine-tRNA ligase activity"/>
    <property type="evidence" value="ECO:0007669"/>
    <property type="project" value="UniProtKB-UniRule"/>
</dbReference>
<dbReference type="GO" id="GO:0000049">
    <property type="term" value="F:tRNA binding"/>
    <property type="evidence" value="ECO:0007669"/>
    <property type="project" value="InterPro"/>
</dbReference>
<dbReference type="GO" id="GO:0006432">
    <property type="term" value="P:phenylalanyl-tRNA aminoacylation"/>
    <property type="evidence" value="ECO:0007669"/>
    <property type="project" value="UniProtKB-UniRule"/>
</dbReference>
<dbReference type="CDD" id="cd00496">
    <property type="entry name" value="PheRS_alpha_core"/>
    <property type="match status" value="1"/>
</dbReference>
<dbReference type="FunFam" id="3.30.930.10:FF:000003">
    <property type="entry name" value="Phenylalanine--tRNA ligase alpha subunit"/>
    <property type="match status" value="1"/>
</dbReference>
<dbReference type="Gene3D" id="3.30.930.10">
    <property type="entry name" value="Bira Bifunctional Protein, Domain 2"/>
    <property type="match status" value="1"/>
</dbReference>
<dbReference type="HAMAP" id="MF_00281">
    <property type="entry name" value="Phe_tRNA_synth_alpha1"/>
    <property type="match status" value="1"/>
</dbReference>
<dbReference type="InterPro" id="IPR006195">
    <property type="entry name" value="aa-tRNA-synth_II"/>
</dbReference>
<dbReference type="InterPro" id="IPR045864">
    <property type="entry name" value="aa-tRNA-synth_II/BPL/LPL"/>
</dbReference>
<dbReference type="InterPro" id="IPR004529">
    <property type="entry name" value="Phe-tRNA-synth_IIc_asu"/>
</dbReference>
<dbReference type="InterPro" id="IPR004188">
    <property type="entry name" value="Phe-tRNA_ligase_II_N"/>
</dbReference>
<dbReference type="InterPro" id="IPR022911">
    <property type="entry name" value="Phe_tRNA_ligase_alpha1_bac"/>
</dbReference>
<dbReference type="InterPro" id="IPR002319">
    <property type="entry name" value="Phenylalanyl-tRNA_Synthase"/>
</dbReference>
<dbReference type="InterPro" id="IPR010978">
    <property type="entry name" value="tRNA-bd_arm"/>
</dbReference>
<dbReference type="NCBIfam" id="TIGR00468">
    <property type="entry name" value="pheS"/>
    <property type="match status" value="1"/>
</dbReference>
<dbReference type="PANTHER" id="PTHR11538:SF41">
    <property type="entry name" value="PHENYLALANINE--TRNA LIGASE, MITOCHONDRIAL"/>
    <property type="match status" value="1"/>
</dbReference>
<dbReference type="PANTHER" id="PTHR11538">
    <property type="entry name" value="PHENYLALANYL-TRNA SYNTHETASE"/>
    <property type="match status" value="1"/>
</dbReference>
<dbReference type="Pfam" id="PF02912">
    <property type="entry name" value="Phe_tRNA-synt_N"/>
    <property type="match status" value="1"/>
</dbReference>
<dbReference type="Pfam" id="PF01409">
    <property type="entry name" value="tRNA-synt_2d"/>
    <property type="match status" value="1"/>
</dbReference>
<dbReference type="SUPFAM" id="SSF55681">
    <property type="entry name" value="Class II aaRS and biotin synthetases"/>
    <property type="match status" value="1"/>
</dbReference>
<dbReference type="SUPFAM" id="SSF46589">
    <property type="entry name" value="tRNA-binding arm"/>
    <property type="match status" value="1"/>
</dbReference>
<dbReference type="PROSITE" id="PS50862">
    <property type="entry name" value="AA_TRNA_LIGASE_II"/>
    <property type="match status" value="1"/>
</dbReference>
<keyword id="KW-0030">Aminoacyl-tRNA synthetase</keyword>
<keyword id="KW-0067">ATP-binding</keyword>
<keyword id="KW-0963">Cytoplasm</keyword>
<keyword id="KW-0436">Ligase</keyword>
<keyword id="KW-0460">Magnesium</keyword>
<keyword id="KW-0479">Metal-binding</keyword>
<keyword id="KW-0547">Nucleotide-binding</keyword>
<keyword id="KW-0648">Protein biosynthesis</keyword>
<accession>Q5PH92</accession>
<protein>
    <recommendedName>
        <fullName evidence="1">Phenylalanine--tRNA ligase alpha subunit</fullName>
        <ecNumber evidence="1">6.1.1.20</ecNumber>
    </recommendedName>
    <alternativeName>
        <fullName evidence="1">Phenylalanyl-tRNA synthetase alpha subunit</fullName>
        <shortName evidence="1">PheRS</shortName>
    </alternativeName>
</protein>
<sequence length="327" mass="36755">MSHLAELVANAAAAINQASDVAALDNVRVEYLGKKGHLTLQMTTLRDLPPEERPAAGAVINAAKEQVQQALNARKAELESAALNARLAAETIDISLPGRRIENGGLHPVTRTIDRIESFFGELGFTVATGPEIEDDYHNFDALNIPGHHPARADHDTFWFDATRLLRTQTSGVQIRTMKAQQPPIRIIAPGRVYRNDYDQTHTPMFHQMEGLIVDTNISFTNLKGTLHDFLRNFFEEDLQIRFRPSYFPFTEPSAEVDVMGKNGKWLEVLGCGMVHPNVLRNVGIDPEIYSGFAFGMGMERLTMLRYGVTDLRSFFENDLRFLKQFK</sequence>
<evidence type="ECO:0000255" key="1">
    <source>
        <dbReference type="HAMAP-Rule" id="MF_00281"/>
    </source>
</evidence>
<feature type="chain" id="PRO_0000126754" description="Phenylalanine--tRNA ligase alpha subunit">
    <location>
        <begin position="1"/>
        <end position="327"/>
    </location>
</feature>
<feature type="binding site" evidence="1">
    <location>
        <position position="252"/>
    </location>
    <ligand>
        <name>Mg(2+)</name>
        <dbReference type="ChEBI" id="CHEBI:18420"/>
        <note>shared with beta subunit</note>
    </ligand>
</feature>
<reference key="1">
    <citation type="journal article" date="2004" name="Nat. Genet.">
        <title>Comparison of genome degradation in Paratyphi A and Typhi, human-restricted serovars of Salmonella enterica that cause typhoid.</title>
        <authorList>
            <person name="McClelland M."/>
            <person name="Sanderson K.E."/>
            <person name="Clifton S.W."/>
            <person name="Latreille P."/>
            <person name="Porwollik S."/>
            <person name="Sabo A."/>
            <person name="Meyer R."/>
            <person name="Bieri T."/>
            <person name="Ozersky P."/>
            <person name="McLellan M."/>
            <person name="Harkins C.R."/>
            <person name="Wang C."/>
            <person name="Nguyen C."/>
            <person name="Berghoff A."/>
            <person name="Elliott G."/>
            <person name="Kohlberg S."/>
            <person name="Strong C."/>
            <person name="Du F."/>
            <person name="Carter J."/>
            <person name="Kremizki C."/>
            <person name="Layman D."/>
            <person name="Leonard S."/>
            <person name="Sun H."/>
            <person name="Fulton L."/>
            <person name="Nash W."/>
            <person name="Miner T."/>
            <person name="Minx P."/>
            <person name="Delehaunty K."/>
            <person name="Fronick C."/>
            <person name="Magrini V."/>
            <person name="Nhan M."/>
            <person name="Warren W."/>
            <person name="Florea L."/>
            <person name="Spieth J."/>
            <person name="Wilson R.K."/>
        </authorList>
    </citation>
    <scope>NUCLEOTIDE SEQUENCE [LARGE SCALE GENOMIC DNA]</scope>
    <source>
        <strain>ATCC 9150 / SARB42</strain>
    </source>
</reference>
<organism>
    <name type="scientific">Salmonella paratyphi A (strain ATCC 9150 / SARB42)</name>
    <dbReference type="NCBI Taxonomy" id="295319"/>
    <lineage>
        <taxon>Bacteria</taxon>
        <taxon>Pseudomonadati</taxon>
        <taxon>Pseudomonadota</taxon>
        <taxon>Gammaproteobacteria</taxon>
        <taxon>Enterobacterales</taxon>
        <taxon>Enterobacteriaceae</taxon>
        <taxon>Salmonella</taxon>
    </lineage>
</organism>
<proteinExistence type="inferred from homology"/>
<gene>
    <name evidence="1" type="primary">pheS</name>
    <name type="ordered locus">SPA1506</name>
</gene>
<name>SYFA_SALPA</name>
<comment type="catalytic activity">
    <reaction evidence="1">
        <text>tRNA(Phe) + L-phenylalanine + ATP = L-phenylalanyl-tRNA(Phe) + AMP + diphosphate + H(+)</text>
        <dbReference type="Rhea" id="RHEA:19413"/>
        <dbReference type="Rhea" id="RHEA-COMP:9668"/>
        <dbReference type="Rhea" id="RHEA-COMP:9699"/>
        <dbReference type="ChEBI" id="CHEBI:15378"/>
        <dbReference type="ChEBI" id="CHEBI:30616"/>
        <dbReference type="ChEBI" id="CHEBI:33019"/>
        <dbReference type="ChEBI" id="CHEBI:58095"/>
        <dbReference type="ChEBI" id="CHEBI:78442"/>
        <dbReference type="ChEBI" id="CHEBI:78531"/>
        <dbReference type="ChEBI" id="CHEBI:456215"/>
        <dbReference type="EC" id="6.1.1.20"/>
    </reaction>
</comment>
<comment type="cofactor">
    <cofactor evidence="1">
        <name>Mg(2+)</name>
        <dbReference type="ChEBI" id="CHEBI:18420"/>
    </cofactor>
    <text evidence="1">Binds 2 magnesium ions per tetramer.</text>
</comment>
<comment type="subunit">
    <text evidence="1">Tetramer of two alpha and two beta subunits.</text>
</comment>
<comment type="subcellular location">
    <subcellularLocation>
        <location evidence="1">Cytoplasm</location>
    </subcellularLocation>
</comment>
<comment type="similarity">
    <text evidence="1">Belongs to the class-II aminoacyl-tRNA synthetase family. Phe-tRNA synthetase alpha subunit type 1 subfamily.</text>
</comment>